<sequence>MTQGPNYRIKFRRRREGKTDYYTRYTYVINNAIRFVPRLTNKYVIVSVSKFDQKGDIMIAYAHSIELVKKYGWKGDTNNTPAAYLTGYLAGLRAVKSGVKAAVSDIGLFVPVKGGRIFAVIKGAIDAGLKVPVGDLGKLKDRVNGSHISAYAQKLKNENQELYNKLFSSYIQRGLDPVLLPQHFEEVLNKIKENGGK</sequence>
<reference key="1">
    <citation type="journal article" date="1999" name="Mol. Phylogenet. Evol.">
        <title>The structure and evolution of the ribosomal proteins encoded in the spc operon of the archaeon (Crenarchaeota) Sulfolobus acidocaldarius.</title>
        <authorList>
            <person name="Yang D."/>
            <person name="Kusser I."/>
            <person name="Koepke A.K."/>
            <person name="Koop B.F."/>
            <person name="Matheson A.T."/>
        </authorList>
    </citation>
    <scope>NUCLEOTIDE SEQUENCE [GENOMIC DNA]</scope>
    <source>
        <strain>ATCC 33909 / DSM 639 / JCM 8929 / NBRC 15157 / NCIMB 11770</strain>
    </source>
</reference>
<reference key="2">
    <citation type="journal article" date="2005" name="J. Bacteriol.">
        <title>The genome of Sulfolobus acidocaldarius, a model organism of the Crenarchaeota.</title>
        <authorList>
            <person name="Chen L."/>
            <person name="Bruegger K."/>
            <person name="Skovgaard M."/>
            <person name="Redder P."/>
            <person name="She Q."/>
            <person name="Torarinsson E."/>
            <person name="Greve B."/>
            <person name="Awayez M."/>
            <person name="Zibat A."/>
            <person name="Klenk H.-P."/>
            <person name="Garrett R.A."/>
        </authorList>
    </citation>
    <scope>NUCLEOTIDE SEQUENCE [LARGE SCALE GENOMIC DNA]</scope>
    <source>
        <strain>ATCC 33909 / DSM 639 / JCM 8929 / NBRC 15157 / NCIMB 11770</strain>
    </source>
</reference>
<name>RL18_SULAC</name>
<protein>
    <recommendedName>
        <fullName evidence="1">Large ribosomal subunit protein uL18</fullName>
    </recommendedName>
    <alternativeName>
        <fullName evidence="2">50S ribosomal protein L18</fullName>
    </alternativeName>
</protein>
<proteinExistence type="evidence at protein level"/>
<evidence type="ECO:0000255" key="1">
    <source>
        <dbReference type="HAMAP-Rule" id="MF_01337"/>
    </source>
</evidence>
<evidence type="ECO:0000305" key="2"/>
<feature type="chain" id="PRO_0000131417" description="Large ribosomal subunit protein uL18">
    <location>
        <begin position="1"/>
        <end position="197"/>
    </location>
</feature>
<dbReference type="EMBL" id="Y07778">
    <property type="protein sequence ID" value="CAA69096.1"/>
    <property type="molecule type" value="Genomic_DNA"/>
</dbReference>
<dbReference type="EMBL" id="CP000077">
    <property type="protein sequence ID" value="AAY79970.1"/>
    <property type="molecule type" value="Genomic_DNA"/>
</dbReference>
<dbReference type="RefSeq" id="WP_011277472.1">
    <property type="nucleotide sequence ID" value="NC_007181.1"/>
</dbReference>
<dbReference type="PDB" id="8HKU">
    <property type="method" value="EM"/>
    <property type="resolution" value="2.72 A"/>
    <property type="chains" value="L18P=2-194"/>
</dbReference>
<dbReference type="PDB" id="8HKV">
    <property type="method" value="EM"/>
    <property type="resolution" value="4.94 A"/>
    <property type="chains" value="L18P=2-194"/>
</dbReference>
<dbReference type="PDB" id="8HKY">
    <property type="method" value="EM"/>
    <property type="resolution" value="4.45 A"/>
    <property type="chains" value="L18P=2-194"/>
</dbReference>
<dbReference type="PDB" id="8HKZ">
    <property type="method" value="EM"/>
    <property type="resolution" value="4.78 A"/>
    <property type="chains" value="L18P=2-194"/>
</dbReference>
<dbReference type="PDB" id="8HL1">
    <property type="method" value="EM"/>
    <property type="resolution" value="3.93 A"/>
    <property type="chains" value="L18P=2-194"/>
</dbReference>
<dbReference type="PDB" id="8HL2">
    <property type="method" value="EM"/>
    <property type="resolution" value="4.10 A"/>
    <property type="chains" value="L18P=2-194"/>
</dbReference>
<dbReference type="PDB" id="8HL3">
    <property type="method" value="EM"/>
    <property type="resolution" value="4.80 A"/>
    <property type="chains" value="L18P=2-194"/>
</dbReference>
<dbReference type="PDB" id="8HL4">
    <property type="method" value="EM"/>
    <property type="resolution" value="4.62 A"/>
    <property type="chains" value="L18P=2-194"/>
</dbReference>
<dbReference type="PDB" id="8HL5">
    <property type="method" value="EM"/>
    <property type="resolution" value="5.72 A"/>
    <property type="chains" value="L18P=2-194"/>
</dbReference>
<dbReference type="PDBsum" id="8HKU"/>
<dbReference type="PDBsum" id="8HKV"/>
<dbReference type="PDBsum" id="8HKY"/>
<dbReference type="PDBsum" id="8HKZ"/>
<dbReference type="PDBsum" id="8HL1"/>
<dbReference type="PDBsum" id="8HL2"/>
<dbReference type="PDBsum" id="8HL3"/>
<dbReference type="PDBsum" id="8HL4"/>
<dbReference type="PDBsum" id="8HL5"/>
<dbReference type="EMDB" id="EMD-34860"/>
<dbReference type="EMDB" id="EMD-34861"/>
<dbReference type="EMDB" id="EMD-34863"/>
<dbReference type="EMDB" id="EMD-34864"/>
<dbReference type="EMDB" id="EMD-34866"/>
<dbReference type="EMDB" id="EMD-34867"/>
<dbReference type="EMDB" id="EMD-34868"/>
<dbReference type="EMDB" id="EMD-34869"/>
<dbReference type="EMDB" id="EMD-34870"/>
<dbReference type="SMR" id="O05640"/>
<dbReference type="STRING" id="330779.Saci_0578"/>
<dbReference type="GeneID" id="14551099"/>
<dbReference type="KEGG" id="sai:Saci_0578"/>
<dbReference type="PATRIC" id="fig|330779.12.peg.557"/>
<dbReference type="eggNOG" id="arCOG04088">
    <property type="taxonomic scope" value="Archaea"/>
</dbReference>
<dbReference type="HOGENOM" id="CLU_056222_2_0_2"/>
<dbReference type="Proteomes" id="UP000001018">
    <property type="component" value="Chromosome"/>
</dbReference>
<dbReference type="GO" id="GO:0022625">
    <property type="term" value="C:cytosolic large ribosomal subunit"/>
    <property type="evidence" value="ECO:0007669"/>
    <property type="project" value="TreeGrafter"/>
</dbReference>
<dbReference type="GO" id="GO:0008097">
    <property type="term" value="F:5S rRNA binding"/>
    <property type="evidence" value="ECO:0007669"/>
    <property type="project" value="InterPro"/>
</dbReference>
<dbReference type="GO" id="GO:0003735">
    <property type="term" value="F:structural constituent of ribosome"/>
    <property type="evidence" value="ECO:0007669"/>
    <property type="project" value="InterPro"/>
</dbReference>
<dbReference type="GO" id="GO:0000027">
    <property type="term" value="P:ribosomal large subunit assembly"/>
    <property type="evidence" value="ECO:0007669"/>
    <property type="project" value="TreeGrafter"/>
</dbReference>
<dbReference type="GO" id="GO:0006412">
    <property type="term" value="P:translation"/>
    <property type="evidence" value="ECO:0007669"/>
    <property type="project" value="UniProtKB-UniRule"/>
</dbReference>
<dbReference type="CDD" id="cd00432">
    <property type="entry name" value="Ribosomal_L18_L5e"/>
    <property type="match status" value="1"/>
</dbReference>
<dbReference type="Gene3D" id="3.30.420.100">
    <property type="match status" value="1"/>
</dbReference>
<dbReference type="HAMAP" id="MF_01337_A">
    <property type="entry name" value="Ribosomal_uL18_A"/>
    <property type="match status" value="1"/>
</dbReference>
<dbReference type="InterPro" id="IPR005485">
    <property type="entry name" value="Rbsml_uL18_euk"/>
</dbReference>
<dbReference type="NCBIfam" id="NF006342">
    <property type="entry name" value="PRK08569.1"/>
    <property type="match status" value="1"/>
</dbReference>
<dbReference type="PANTHER" id="PTHR23410:SF12">
    <property type="entry name" value="LARGE RIBOSOMAL SUBUNIT PROTEIN UL18"/>
    <property type="match status" value="1"/>
</dbReference>
<dbReference type="PANTHER" id="PTHR23410">
    <property type="entry name" value="RIBOSOMAL PROTEIN L5-RELATED"/>
    <property type="match status" value="1"/>
</dbReference>
<dbReference type="Pfam" id="PF17144">
    <property type="entry name" value="Ribosomal_L5e"/>
    <property type="match status" value="1"/>
</dbReference>
<dbReference type="SUPFAM" id="SSF53137">
    <property type="entry name" value="Translational machinery components"/>
    <property type="match status" value="1"/>
</dbReference>
<organism>
    <name type="scientific">Sulfolobus acidocaldarius (strain ATCC 33909 / DSM 639 / JCM 8929 / NBRC 15157 / NCIMB 11770)</name>
    <dbReference type="NCBI Taxonomy" id="330779"/>
    <lineage>
        <taxon>Archaea</taxon>
        <taxon>Thermoproteota</taxon>
        <taxon>Thermoprotei</taxon>
        <taxon>Sulfolobales</taxon>
        <taxon>Sulfolobaceae</taxon>
        <taxon>Sulfolobus</taxon>
    </lineage>
</organism>
<comment type="function">
    <text evidence="1">This is one of the proteins that bind and probably mediate the attachment of the 5S RNA into the large ribosomal subunit, where it forms part of the central protuberance.</text>
</comment>
<comment type="subunit">
    <text evidence="1">Part of the 50S ribosomal subunit. Contacts the 5S and 23S rRNAs.</text>
</comment>
<comment type="similarity">
    <text evidence="1">Belongs to the universal ribosomal protein uL18 family.</text>
</comment>
<accession>O05640</accession>
<accession>Q4JB59</accession>
<gene>
    <name evidence="1" type="primary">rpl18</name>
    <name type="ordered locus">Saci_0578</name>
</gene>
<keyword id="KW-0002">3D-structure</keyword>
<keyword id="KW-1185">Reference proteome</keyword>
<keyword id="KW-0687">Ribonucleoprotein</keyword>
<keyword id="KW-0689">Ribosomal protein</keyword>
<keyword id="KW-0694">RNA-binding</keyword>
<keyword id="KW-0699">rRNA-binding</keyword>